<dbReference type="EMBL" id="X52734">
    <property type="protein sequence ID" value="CAA36952.1"/>
    <property type="molecule type" value="Genomic_DNA"/>
</dbReference>
<dbReference type="PDB" id="1XA1">
    <property type="method" value="X-ray"/>
    <property type="resolution" value="1.80 A"/>
    <property type="chains" value="A/B/C/D=331-585"/>
</dbReference>
<dbReference type="PDB" id="1XA7">
    <property type="method" value="X-ray"/>
    <property type="resolution" value="2.40 A"/>
    <property type="chains" value="A/B=331-585"/>
</dbReference>
<dbReference type="PDB" id="1XKZ">
    <property type="method" value="X-ray"/>
    <property type="resolution" value="1.75 A"/>
    <property type="chains" value="A/B/C/D=331-585"/>
</dbReference>
<dbReference type="PDB" id="3Q81">
    <property type="method" value="X-ray"/>
    <property type="resolution" value="2.00 A"/>
    <property type="chains" value="A/B=332-583"/>
</dbReference>
<dbReference type="PDB" id="3Q82">
    <property type="method" value="X-ray"/>
    <property type="resolution" value="2.10 A"/>
    <property type="chains" value="A/B=332-583"/>
</dbReference>
<dbReference type="PDB" id="3UY6">
    <property type="method" value="X-ray"/>
    <property type="resolution" value="2.10 A"/>
    <property type="chains" value="A/B=332-583"/>
</dbReference>
<dbReference type="PDB" id="6O9W">
    <property type="method" value="X-ray"/>
    <property type="resolution" value="1.95 A"/>
    <property type="chains" value="A/B=330-585"/>
</dbReference>
<dbReference type="PDB" id="8C0P">
    <property type="method" value="X-ray"/>
    <property type="resolution" value="1.97 A"/>
    <property type="chains" value="A/B=332-585"/>
</dbReference>
<dbReference type="PDB" id="8C0S">
    <property type="method" value="X-ray"/>
    <property type="resolution" value="2.00 A"/>
    <property type="chains" value="A/B=332-585"/>
</dbReference>
<dbReference type="PDB" id="8CF3">
    <property type="method" value="X-ray"/>
    <property type="resolution" value="2.52 A"/>
    <property type="chains" value="C/E=333-583"/>
</dbReference>
<dbReference type="PDB" id="8EXP">
    <property type="method" value="EM"/>
    <property type="resolution" value="4.20 A"/>
    <property type="chains" value="A/B=1-585"/>
</dbReference>
<dbReference type="PDB" id="8EXQ">
    <property type="method" value="EM"/>
    <property type="resolution" value="4.90 A"/>
    <property type="chains" value="A/B=1-585"/>
</dbReference>
<dbReference type="PDB" id="8EXR">
    <property type="method" value="EM"/>
    <property type="resolution" value="3.80 A"/>
    <property type="chains" value="A/B/C=1-585"/>
</dbReference>
<dbReference type="PDB" id="8EXS">
    <property type="method" value="EM"/>
    <property type="resolution" value="4.30 A"/>
    <property type="chains" value="A/B=1-585"/>
</dbReference>
<dbReference type="PDB" id="8EXT">
    <property type="method" value="EM"/>
    <property type="resolution" value="4.60 A"/>
    <property type="chains" value="A/B=1-585"/>
</dbReference>
<dbReference type="PDBsum" id="1XA1"/>
<dbReference type="PDBsum" id="1XA7"/>
<dbReference type="PDBsum" id="1XKZ"/>
<dbReference type="PDBsum" id="3Q81"/>
<dbReference type="PDBsum" id="3Q82"/>
<dbReference type="PDBsum" id="3UY6"/>
<dbReference type="PDBsum" id="6O9W"/>
<dbReference type="PDBsum" id="8C0P"/>
<dbReference type="PDBsum" id="8C0S"/>
<dbReference type="PDBsum" id="8CF3"/>
<dbReference type="PDBsum" id="8EXP"/>
<dbReference type="PDBsum" id="8EXQ"/>
<dbReference type="PDBsum" id="8EXR"/>
<dbReference type="PDBsum" id="8EXS"/>
<dbReference type="PDBsum" id="8EXT"/>
<dbReference type="SMR" id="P18357"/>
<dbReference type="DrugBank" id="DB03530">
    <property type="generic name" value="Acylated ceftazidime"/>
</dbReference>
<dbReference type="DrugBank" id="DB02968">
    <property type="generic name" value="Penicillin G Acyl-Serine"/>
</dbReference>
<dbReference type="MEROPS" id="M56.001"/>
<dbReference type="EvolutionaryTrace" id="P18357"/>
<dbReference type="GO" id="GO:0005886">
    <property type="term" value="C:plasma membrane"/>
    <property type="evidence" value="ECO:0007669"/>
    <property type="project" value="UniProtKB-SubCell"/>
</dbReference>
<dbReference type="GO" id="GO:0008658">
    <property type="term" value="F:penicillin binding"/>
    <property type="evidence" value="ECO:0007669"/>
    <property type="project" value="InterPro"/>
</dbReference>
<dbReference type="CDD" id="cd07341">
    <property type="entry name" value="M56_BlaR1_MecR1_like"/>
    <property type="match status" value="1"/>
</dbReference>
<dbReference type="Gene3D" id="3.40.710.10">
    <property type="entry name" value="DD-peptidase/beta-lactamase superfamily"/>
    <property type="match status" value="1"/>
</dbReference>
<dbReference type="InterPro" id="IPR012338">
    <property type="entry name" value="Beta-lactam/transpept-like"/>
</dbReference>
<dbReference type="InterPro" id="IPR052173">
    <property type="entry name" value="Beta-lactam_resp_regulator"/>
</dbReference>
<dbReference type="InterPro" id="IPR001460">
    <property type="entry name" value="PCN-bd_Tpept"/>
</dbReference>
<dbReference type="InterPro" id="IPR008756">
    <property type="entry name" value="Peptidase_M56"/>
</dbReference>
<dbReference type="NCBIfam" id="NF000326">
    <property type="entry name" value="blaR1_generic"/>
    <property type="match status" value="1"/>
</dbReference>
<dbReference type="NCBIfam" id="NF033108">
    <property type="entry name" value="sensor_BlaR1"/>
    <property type="match status" value="1"/>
</dbReference>
<dbReference type="PANTHER" id="PTHR34978">
    <property type="entry name" value="POSSIBLE SENSOR-TRANSDUCER PROTEIN BLAR"/>
    <property type="match status" value="1"/>
</dbReference>
<dbReference type="PANTHER" id="PTHR34978:SF3">
    <property type="entry name" value="SLR0241 PROTEIN"/>
    <property type="match status" value="1"/>
</dbReference>
<dbReference type="Pfam" id="PF05569">
    <property type="entry name" value="Peptidase_M56"/>
    <property type="match status" value="1"/>
</dbReference>
<dbReference type="Pfam" id="PF00905">
    <property type="entry name" value="Transpeptidase"/>
    <property type="match status" value="1"/>
</dbReference>
<dbReference type="SUPFAM" id="SSF56601">
    <property type="entry name" value="beta-lactamase/transpeptidase-like"/>
    <property type="match status" value="1"/>
</dbReference>
<name>BLAR_STAAU</name>
<protein>
    <recommendedName>
        <fullName>Regulatory protein BlaR1</fullName>
    </recommendedName>
</protein>
<evidence type="ECO:0000250" key="1">
    <source>
        <dbReference type="UniProtKB" id="P12287"/>
    </source>
</evidence>
<evidence type="ECO:0000269" key="2">
    <source>
    </source>
</evidence>
<evidence type="ECO:0000269" key="3">
    <source>
    </source>
</evidence>
<evidence type="ECO:0000269" key="4">
    <source>
    </source>
</evidence>
<evidence type="ECO:0000269" key="5">
    <source>
    </source>
</evidence>
<evidence type="ECO:0000269" key="6">
    <source>
    </source>
</evidence>
<evidence type="ECO:0000269" key="7">
    <source>
    </source>
</evidence>
<evidence type="ECO:0000305" key="8"/>
<evidence type="ECO:0007829" key="9">
    <source>
        <dbReference type="PDB" id="1XA1"/>
    </source>
</evidence>
<evidence type="ECO:0007829" key="10">
    <source>
        <dbReference type="PDB" id="1XA7"/>
    </source>
</evidence>
<evidence type="ECO:0007829" key="11">
    <source>
        <dbReference type="PDB" id="1XKZ"/>
    </source>
</evidence>
<evidence type="ECO:0007829" key="12">
    <source>
        <dbReference type="PDB" id="8C0P"/>
    </source>
</evidence>
<feature type="chain" id="PRO_0000195470" description="Regulatory protein BlaR1">
    <location>
        <begin position="1"/>
        <end position="585"/>
    </location>
</feature>
<feature type="topological domain" description="Extracellular" evidence="1">
    <location>
        <begin position="1"/>
        <end position="4"/>
    </location>
</feature>
<feature type="transmembrane region" description="Helical" evidence="1">
    <location>
        <begin position="5"/>
        <end position="22"/>
    </location>
</feature>
<feature type="topological domain" description="Cytoplasmic" evidence="1">
    <location>
        <begin position="23"/>
        <end position="31"/>
    </location>
</feature>
<feature type="transmembrane region" description="Helical" evidence="1">
    <location>
        <begin position="32"/>
        <end position="48"/>
    </location>
</feature>
<feature type="topological domain" description="Extracellular" evidence="1">
    <location>
        <begin position="49"/>
        <end position="104"/>
    </location>
</feature>
<feature type="transmembrane region" description="Helical" evidence="1">
    <location>
        <begin position="105"/>
        <end position="122"/>
    </location>
</feature>
<feature type="topological domain" description="Cytoplasmic" evidence="1">
    <location>
        <begin position="123"/>
        <end position="311"/>
    </location>
</feature>
<feature type="transmembrane region" description="Helical" evidence="1">
    <location>
        <begin position="312"/>
        <end position="328"/>
    </location>
</feature>
<feature type="topological domain" description="Extracellular" evidence="1">
    <location>
        <begin position="329"/>
        <end position="585"/>
    </location>
</feature>
<feature type="region of interest" description="Beta-lactam antibiotic sensor domain" evidence="4 5 6 7">
    <location>
        <begin position="331"/>
        <end position="585"/>
    </location>
</feature>
<feature type="active site" description="Acyl-ester intermediate" evidence="5 6">
    <location>
        <position position="389"/>
    </location>
</feature>
<feature type="modified residue" description="N6-carboxylysine" evidence="3">
    <location>
        <position position="392"/>
    </location>
</feature>
<feature type="mutagenesis site" description="Complete loss of transcriptional repressor BlaI cleavage." evidence="2">
    <original>H</original>
    <variation>A</variation>
    <location>
        <position position="201"/>
    </location>
</feature>
<feature type="mutagenesis site" description="Complete loss of transcriptional repressor BlaI cleavage." evidence="2">
    <original>E</original>
    <variation>A</variation>
    <location>
        <position position="202"/>
    </location>
</feature>
<feature type="mutagenesis site" description="Complete loss of the acylation step." evidence="3">
    <original>S</original>
    <variation>A</variation>
    <location>
        <position position="389"/>
    </location>
</feature>
<feature type="mutagenesis site" description="Almost complete loss of the acylation step." evidence="3">
    <original>K</original>
    <variation>A</variation>
    <location>
        <position position="392"/>
    </location>
</feature>
<feature type="mutagenesis site" description="Exhibits enhanced beta-lactamase activity with cephalosporins as substrates but not with penicillins and carbapenems." evidence="7">
    <original>N</original>
    <variation>V</variation>
    <location>
        <position position="439"/>
    </location>
</feature>
<feature type="strand" evidence="12">
    <location>
        <begin position="336"/>
        <end position="338"/>
    </location>
</feature>
<feature type="strand" evidence="11">
    <location>
        <begin position="345"/>
        <end position="350"/>
    </location>
</feature>
<feature type="helix" evidence="11">
    <location>
        <begin position="353"/>
        <end position="356"/>
    </location>
</feature>
<feature type="strand" evidence="11">
    <location>
        <begin position="360"/>
        <end position="367"/>
    </location>
</feature>
<feature type="turn" evidence="11">
    <location>
        <begin position="368"/>
        <end position="371"/>
    </location>
</feature>
<feature type="strand" evidence="11">
    <location>
        <begin position="372"/>
        <end position="377"/>
    </location>
</feature>
<feature type="helix" evidence="11">
    <location>
        <begin position="378"/>
        <end position="381"/>
    </location>
</feature>
<feature type="strand" evidence="11">
    <location>
        <begin position="383"/>
        <end position="385"/>
    </location>
</feature>
<feature type="helix" evidence="11">
    <location>
        <begin position="388"/>
        <end position="391"/>
    </location>
</feature>
<feature type="helix" evidence="11">
    <location>
        <begin position="392"/>
        <end position="401"/>
    </location>
</feature>
<feature type="strand" evidence="10">
    <location>
        <begin position="402"/>
        <end position="405"/>
    </location>
</feature>
<feature type="helix" evidence="11">
    <location>
        <begin position="422"/>
        <end position="424"/>
    </location>
</feature>
<feature type="helix" evidence="11">
    <location>
        <begin position="430"/>
        <end position="435"/>
    </location>
</feature>
<feature type="helix" evidence="11">
    <location>
        <begin position="439"/>
        <end position="446"/>
    </location>
</feature>
<feature type="helix" evidence="11">
    <location>
        <begin position="451"/>
        <end position="461"/>
    </location>
</feature>
<feature type="strand" evidence="11">
    <location>
        <begin position="471"/>
        <end position="473"/>
    </location>
</feature>
<feature type="turn" evidence="11">
    <location>
        <begin position="474"/>
        <end position="477"/>
    </location>
</feature>
<feature type="helix" evidence="11">
    <location>
        <begin position="484"/>
        <end position="496"/>
    </location>
</feature>
<feature type="helix" evidence="11">
    <location>
        <begin position="503"/>
        <end position="513"/>
    </location>
</feature>
<feature type="strand" evidence="11">
    <location>
        <begin position="514"/>
        <end position="517"/>
    </location>
</feature>
<feature type="strand" evidence="11">
    <location>
        <begin position="519"/>
        <end position="532"/>
    </location>
</feature>
<feature type="strand" evidence="11">
    <location>
        <begin position="535"/>
        <end position="549"/>
    </location>
</feature>
<feature type="strand" evidence="11">
    <location>
        <begin position="551"/>
        <end position="562"/>
    </location>
</feature>
<feature type="helix" evidence="11">
    <location>
        <begin position="565"/>
        <end position="578"/>
    </location>
</feature>
<feature type="turn" evidence="9">
    <location>
        <begin position="579"/>
        <end position="582"/>
    </location>
</feature>
<reference key="1">
    <citation type="journal article" date="1990" name="Mol. Microbiol.">
        <title>Tn552, a novel transposable element from Staphylococcus aureus.</title>
        <authorList>
            <person name="Rowland S.J."/>
            <person name="Dyke K.G.H."/>
        </authorList>
    </citation>
    <scope>NUCLEOTIDE SEQUENCE [GENOMIC DNA]</scope>
    <source>
        <strain>NCTC 9789 / PS80</strain>
        <transposon>Tn552</transposon>
    </source>
</reference>
<reference key="2">
    <citation type="journal article" date="2001" name="Science">
        <title>A proteolytic transmembrane signaling pathway and resistance to beta-lactams in staphylococci.</title>
        <authorList>
            <person name="Zhang H.Z."/>
            <person name="Hackbarth C.J."/>
            <person name="Chansky K.M."/>
            <person name="Chambers H.F."/>
        </authorList>
    </citation>
    <scope>FUNCTION</scope>
    <scope>MUTAGENESIS OF HIS-201 AND GLU-202</scope>
</reference>
<reference key="3">
    <citation type="journal article" date="2003" name="J. Biol. Chem.">
        <title>Resistance to beta-lactam antibiotics and its mediation by the sensor domain of the transmembrane BlaR signaling pathway in Staphylococcus aureus.</title>
        <authorList>
            <person name="Golemi-Kotra D."/>
            <person name="Cha J.Y."/>
            <person name="Meroueh S.O."/>
            <person name="Vakulenko S.B."/>
            <person name="Mobashery S."/>
        </authorList>
    </citation>
    <scope>FUNCTION</scope>
    <scope>MUTAGENESIS OF SER-389 AND LYS-392</scope>
    <scope>CARBOXYLATION AT LYS-392</scope>
</reference>
<reference key="4">
    <citation type="journal article" date="2004" name="J. Am. Chem. Soc.">
        <title>X-ray crystal structure of the acylated beta-lactam sensor domain of BlaR1 from Staphylococcus aureus and the mechanism of receptor activation for signal transduction.</title>
        <authorList>
            <person name="Birck C."/>
            <person name="Cha J.Y."/>
            <person name="Cross J."/>
            <person name="Schulze-Briese C."/>
            <person name="Meroueh S.O."/>
            <person name="Schlegel H.B."/>
            <person name="Mobashery S."/>
            <person name="Samama J.P."/>
        </authorList>
    </citation>
    <scope>X-RAY CRYSTALLOGRAPHY (1.75 ANGSTROMS) OF 331-585</scope>
    <scope>DOMAIN</scope>
    <scope>ACTIVE SITE</scope>
    <scope>FUNCTION</scope>
</reference>
<reference key="5">
    <citation type="journal article" date="2004" name="J. Biol. Chem.">
        <title>Crystal structures of the Apo and penicillin-acylated forms of the BlaR1 beta-lactam sensor of Staphylococcus aureus.</title>
        <authorList>
            <person name="Wilke M.S."/>
            <person name="Hills T.L."/>
            <person name="Zhang H.Z."/>
            <person name="Chambers H.F."/>
            <person name="Strynadka N.C."/>
        </authorList>
    </citation>
    <scope>X-RAY CRYSTALLOGRAPHY (1.80 ANGSTROMS) OF 331-585</scope>
    <scope>DOMAIN</scope>
</reference>
<reference key="6">
    <citation type="journal article" date="2011" name="J. Biol. Chem.">
        <title>Lysine Nzeta-decarboxylation switch and activation of the beta-lactam sensor domain of BlaR1 protein of methicillin-resistant Staphylococcus aureus.</title>
        <authorList>
            <person name="Borbulevych O."/>
            <person name="Kumarasiri M."/>
            <person name="Wilson B."/>
            <person name="Llarrull L.I."/>
            <person name="Lee M."/>
            <person name="Hesek D."/>
            <person name="Shi Q."/>
            <person name="Peng J."/>
            <person name="Baker B.M."/>
            <person name="Mobashery S."/>
        </authorList>
    </citation>
    <scope>X-RAY CRYSTALLOGRAPHY (2.00 ANGSTROMS) OF 332-583</scope>
    <scope>CARBOXYLATION AT LYS-392</scope>
    <scope>ACTIVE SITE</scope>
    <scope>DOMAIN</scope>
</reference>
<reference key="7">
    <citation type="journal article" date="2012" name="J. Biol. Chem.">
        <title>An amino acid position at crossroads of evolution of protein function: antibiotic sensor domain of BlaR1 protein from Staphylococcus aureus versus clasS D beta-lactamases.</title>
        <authorList>
            <person name="Kumarasiri M."/>
            <person name="Llarrull L.I."/>
            <person name="Borbulevych O."/>
            <person name="Fishovitz J."/>
            <person name="Lastochkin E."/>
            <person name="Baker B.M."/>
            <person name="Mobashery S."/>
        </authorList>
    </citation>
    <scope>X-RAY CRYSTALLOGRAPHY (2.10 ANGSTROMS) OF 332-583</scope>
    <scope>DOMAIN</scope>
    <scope>MUTAGENESIS OF ASN-439</scope>
</reference>
<comment type="function">
    <text evidence="2 3 5">Integral membrane protein involved in sensing of the presence of beta-lactam antibiotics and transduction of the information to the cytoplasm. Mechanistically, activation of the signal transducer involves acylation of a serine in the C-terminal sensor domain upon binding of the beta-lactam antibiotic (PubMed:12591921, PubMed:15506754). In turn, a conformational change occurs and the signal is transmitted from the cell surface to the cytoplasm. There, the zinc protease domain is activated and initiates autoproteolysis as well as cleavage of the transcriptional repressor BlaI leading to derepression of antibiotic resistance genes (PubMed:11239156).</text>
</comment>
<comment type="subcellular location">
    <subcellularLocation>
        <location evidence="1">Cell membrane</location>
        <topology evidence="1">Multi-pass membrane protein</topology>
    </subcellularLocation>
</comment>
<comment type="PTM">
    <text evidence="3 5 6">Carboxylation occurs on two lysine residues. Carboxylation at 'Lys-392' activates the active site serine residue for acylation (PubMed:12591921). On acylation, the lysine side chain experiences a spontaneous decarboxylation that entraps the sensor in its activated state (PubMed:15506754, PubMed:21775440).</text>
</comment>
<comment type="similarity">
    <text evidence="8">Belongs to the peptidase M56 family.</text>
</comment>
<accession>P18357</accession>
<organism>
    <name type="scientific">Staphylococcus aureus</name>
    <dbReference type="NCBI Taxonomy" id="1280"/>
    <lineage>
        <taxon>Bacteria</taxon>
        <taxon>Bacillati</taxon>
        <taxon>Bacillota</taxon>
        <taxon>Bacilli</taxon>
        <taxon>Bacillales</taxon>
        <taxon>Staphylococcaceae</taxon>
        <taxon>Staphylococcus</taxon>
    </lineage>
</organism>
<sequence length="585" mass="69246">MAKLLIMSIVSFCFIFLLLLFFRYILKRYFNYMLNYKVWYLTLLAGLIPFIPIKFSLFKFNNVNNQAPTVESKSHDLNHNINTTKPIQEFATDIHKFNWDSIDNISTVIWIVLVIILSFKFLKALLYLKYLKKQSLYLNENEKNKIDTILFNHQYKKNIVIRKAETIQSPITFWYGKYIILIPSSYFKSVIDKRLKYIILHEYAHAKNRDTLHLIIFNIFSIIMSYNPLVHIVKRKIIHDNEVEADRFVLNNINKNEFKTYAESIMDSVLNVPFFNKNILSHSFNGKKSLLKRRLINIKEANLKKQSKLILIFICIFTFLLMVIQSQFLMGQSITDYNYKKPLHNDYQILDKSKIFGSNSGSFVMYSMKKDKYYIYNEKESRKRYSPNSTYKIYLAMFGLDRHIINDENSRMSWNHKHYPFDAWNKEQDLNTAMQNSVNWYFERISDQIPKNYTATQLKQLNYGNKNLGSYKSYWMEDSLKISNLEQVIVFKNMMEQNNHFSKKAKNQLSSSLLIKKNEKYELYGKTGTGIVNGKYNNGWFVGYVITNHDKYYFATHLSDGKPSGKNAELISEKILKEMGVLNGQ</sequence>
<keyword id="KW-0002">3D-structure</keyword>
<keyword id="KW-1003">Cell membrane</keyword>
<keyword id="KW-0472">Membrane</keyword>
<keyword id="KW-0812">Transmembrane</keyword>
<keyword id="KW-1133">Transmembrane helix</keyword>
<keyword id="KW-0814">Transposable element</keyword>
<gene>
    <name type="primary">blaR1</name>
</gene>
<proteinExistence type="evidence at protein level"/>